<organism>
    <name type="scientific">Dickeya dadantii (strain 3937)</name>
    <name type="common">Erwinia chrysanthemi (strain 3937)</name>
    <dbReference type="NCBI Taxonomy" id="198628"/>
    <lineage>
        <taxon>Bacteria</taxon>
        <taxon>Pseudomonadati</taxon>
        <taxon>Pseudomonadota</taxon>
        <taxon>Gammaproteobacteria</taxon>
        <taxon>Enterobacterales</taxon>
        <taxon>Pectobacteriaceae</taxon>
        <taxon>Dickeya</taxon>
    </lineage>
</organism>
<reference key="1">
    <citation type="journal article" date="1991" name="Mol. Microbiol.">
        <title>Analysis of an Erwinia chrysanthemi gene cluster involved in pectin degradation.</title>
        <authorList>
            <person name="Condemine G."/>
            <person name="Robert-Baudouy J."/>
        </authorList>
    </citation>
    <scope>NUCLEOTIDE SEQUENCE [GENOMIC DNA]</scope>
    <source>
        <strain>3937</strain>
    </source>
</reference>
<reference key="2">
    <citation type="journal article" date="2011" name="J. Bacteriol.">
        <title>Genome sequence of the plant-pathogenic bacterium Dickeya dadantii 3937.</title>
        <authorList>
            <person name="Glasner J.D."/>
            <person name="Yang C.H."/>
            <person name="Reverchon S."/>
            <person name="Hugouvieux-Cotte-Pattat N."/>
            <person name="Condemine G."/>
            <person name="Bohin J.P."/>
            <person name="Van Gijsegem F."/>
            <person name="Yang S."/>
            <person name="Franza T."/>
            <person name="Expert D."/>
            <person name="Plunkett G. III"/>
            <person name="San Francisco M.J."/>
            <person name="Charkowski A.O."/>
            <person name="Py B."/>
            <person name="Bell K."/>
            <person name="Rauscher L."/>
            <person name="Rodriguez-Palenzuela P."/>
            <person name="Toussaint A."/>
            <person name="Holeva M.C."/>
            <person name="He S.Y."/>
            <person name="Douet V."/>
            <person name="Boccara M."/>
            <person name="Blanco C."/>
            <person name="Toth I."/>
            <person name="Anderson B.D."/>
            <person name="Biehl B.S."/>
            <person name="Mau B."/>
            <person name="Flynn S.M."/>
            <person name="Barras F."/>
            <person name="Lindeberg M."/>
            <person name="Birch P.R."/>
            <person name="Tsuyumu S."/>
            <person name="Shi X."/>
            <person name="Hibbing M."/>
            <person name="Yap M.N."/>
            <person name="Carpentier M."/>
            <person name="Dassa E."/>
            <person name="Umehara M."/>
            <person name="Kim J.F."/>
            <person name="Rusch M."/>
            <person name="Soni P."/>
            <person name="Mayhew G.F."/>
            <person name="Fouts D.E."/>
            <person name="Gill S.R."/>
            <person name="Blattner F.R."/>
            <person name="Keen N.T."/>
            <person name="Perna N.T."/>
        </authorList>
    </citation>
    <scope>NUCLEOTIDE SEQUENCE [LARGE SCALE GENOMIC DNA]</scope>
    <source>
        <strain>3937</strain>
    </source>
</reference>
<dbReference type="EMBL" id="X62073">
    <property type="protein sequence ID" value="CAA43987.1"/>
    <property type="molecule type" value="Genomic_DNA"/>
</dbReference>
<dbReference type="EMBL" id="CP002038">
    <property type="protein sequence ID" value="ADM98614.1"/>
    <property type="molecule type" value="Genomic_DNA"/>
</dbReference>
<dbReference type="PIR" id="S17709">
    <property type="entry name" value="S17709"/>
</dbReference>
<dbReference type="RefSeq" id="WP_013318064.1">
    <property type="nucleotide sequence ID" value="NC_014500.1"/>
</dbReference>
<dbReference type="SMR" id="Q05527"/>
<dbReference type="STRING" id="198628.Dda3937_00019"/>
<dbReference type="KEGG" id="ddd:Dda3937_00019"/>
<dbReference type="PATRIC" id="fig|198628.6.peg.2391"/>
<dbReference type="eggNOG" id="COG1917">
    <property type="taxonomic scope" value="Bacteria"/>
</dbReference>
<dbReference type="HOGENOM" id="CLU_134269_1_1_6"/>
<dbReference type="OrthoDB" id="9811153at2"/>
<dbReference type="UniPathway" id="UPA00545"/>
<dbReference type="Proteomes" id="UP000006859">
    <property type="component" value="Chromosome"/>
</dbReference>
<dbReference type="GO" id="GO:0045490">
    <property type="term" value="P:pectin catabolic process"/>
    <property type="evidence" value="ECO:0007669"/>
    <property type="project" value="UniProtKB-UniPathway"/>
</dbReference>
<dbReference type="CDD" id="cd02238">
    <property type="entry name" value="cupin_KdgF"/>
    <property type="match status" value="1"/>
</dbReference>
<dbReference type="Gene3D" id="2.60.120.10">
    <property type="entry name" value="Jelly Rolls"/>
    <property type="match status" value="1"/>
</dbReference>
<dbReference type="InterPro" id="IPR052535">
    <property type="entry name" value="Bacilysin_H2HPP_isomerase"/>
</dbReference>
<dbReference type="InterPro" id="IPR013096">
    <property type="entry name" value="Cupin_2"/>
</dbReference>
<dbReference type="InterPro" id="IPR025499">
    <property type="entry name" value="KdgF"/>
</dbReference>
<dbReference type="InterPro" id="IPR014710">
    <property type="entry name" value="RmlC-like_jellyroll"/>
</dbReference>
<dbReference type="InterPro" id="IPR011051">
    <property type="entry name" value="RmlC_Cupin_sf"/>
</dbReference>
<dbReference type="PANTHER" id="PTHR40112">
    <property type="entry name" value="H2HPP ISOMERASE"/>
    <property type="match status" value="1"/>
</dbReference>
<dbReference type="PANTHER" id="PTHR40112:SF1">
    <property type="entry name" value="H2HPP ISOMERASE"/>
    <property type="match status" value="1"/>
</dbReference>
<dbReference type="Pfam" id="PF07883">
    <property type="entry name" value="Cupin_2"/>
    <property type="match status" value="1"/>
</dbReference>
<dbReference type="PIRSF" id="PIRSF029883">
    <property type="entry name" value="KdgF"/>
    <property type="match status" value="1"/>
</dbReference>
<dbReference type="SUPFAM" id="SSF51182">
    <property type="entry name" value="RmlC-like cupins"/>
    <property type="match status" value="1"/>
</dbReference>
<evidence type="ECO:0000255" key="1"/>
<proteinExistence type="predicted"/>
<feature type="chain" id="PRO_0000084298" description="Pectin degradation protein KdgF">
    <location>
        <begin position="1"/>
        <end position="110"/>
    </location>
</feature>
<feature type="domain" description="Cupin type-2" evidence="1">
    <location>
        <begin position="35"/>
        <end position="94"/>
    </location>
</feature>
<protein>
    <recommendedName>
        <fullName>Pectin degradation protein KdgF</fullName>
    </recommendedName>
</protein>
<name>KDGF_DICD3</name>
<gene>
    <name type="primary">kdgF</name>
    <name type="ordered locus">Dda3937_00019</name>
</gene>
<accession>Q05527</accession>
<accession>E0SDC2</accession>
<comment type="function">
    <text>May have a role in pathogenicity.</text>
</comment>
<comment type="pathway">
    <text>Glycan metabolism; pectin degradation.</text>
</comment>
<sequence>MRRYFIDDETPWEELGDGIKRKIITWSDDLMMVCVHFAKGAIGTPHKHDIHDQIAYVAAGSFEVVIEGEKRILKTGDAYMAVKNEMHGVVSLEEGSVLIDTFSPKRADFL</sequence>
<keyword id="KW-1185">Reference proteome</keyword>